<accession>A6TC04</accession>
<evidence type="ECO:0000255" key="1">
    <source>
        <dbReference type="HAMAP-Rule" id="MF_00171"/>
    </source>
</evidence>
<protein>
    <recommendedName>
        <fullName evidence="1">tRNA pseudouridine synthase A</fullName>
        <ecNumber evidence="1">5.4.99.12</ecNumber>
    </recommendedName>
    <alternativeName>
        <fullName evidence="1">tRNA pseudouridine(38-40) synthase</fullName>
    </alternativeName>
    <alternativeName>
        <fullName evidence="1">tRNA pseudouridylate synthase I</fullName>
    </alternativeName>
    <alternativeName>
        <fullName evidence="1">tRNA-uridine isomerase I</fullName>
    </alternativeName>
</protein>
<proteinExistence type="inferred from homology"/>
<comment type="function">
    <text evidence="1">Formation of pseudouridine at positions 38, 39 and 40 in the anticodon stem and loop of transfer RNAs.</text>
</comment>
<comment type="catalytic activity">
    <reaction evidence="1">
        <text>uridine(38/39/40) in tRNA = pseudouridine(38/39/40) in tRNA</text>
        <dbReference type="Rhea" id="RHEA:22376"/>
        <dbReference type="Rhea" id="RHEA-COMP:10085"/>
        <dbReference type="Rhea" id="RHEA-COMP:10087"/>
        <dbReference type="ChEBI" id="CHEBI:65314"/>
        <dbReference type="ChEBI" id="CHEBI:65315"/>
        <dbReference type="EC" id="5.4.99.12"/>
    </reaction>
</comment>
<comment type="subunit">
    <text evidence="1">Homodimer.</text>
</comment>
<comment type="similarity">
    <text evidence="1">Belongs to the tRNA pseudouridine synthase TruA family.</text>
</comment>
<dbReference type="EC" id="5.4.99.12" evidence="1"/>
<dbReference type="EMBL" id="CP000647">
    <property type="protein sequence ID" value="ABR78125.1"/>
    <property type="molecule type" value="Genomic_DNA"/>
</dbReference>
<dbReference type="RefSeq" id="WP_015958766.1">
    <property type="nucleotide sequence ID" value="NC_009648.1"/>
</dbReference>
<dbReference type="SMR" id="A6TC04"/>
<dbReference type="STRING" id="272620.KPN_02708"/>
<dbReference type="PaxDb" id="272620-KPN_02708"/>
<dbReference type="EnsemblBacteria" id="ABR78125">
    <property type="protein sequence ID" value="ABR78125"/>
    <property type="gene ID" value="KPN_02708"/>
</dbReference>
<dbReference type="KEGG" id="kpn:KPN_02708"/>
<dbReference type="HOGENOM" id="CLU_014673_0_2_6"/>
<dbReference type="Proteomes" id="UP000000265">
    <property type="component" value="Chromosome"/>
</dbReference>
<dbReference type="GO" id="GO:0003723">
    <property type="term" value="F:RNA binding"/>
    <property type="evidence" value="ECO:0007669"/>
    <property type="project" value="InterPro"/>
</dbReference>
<dbReference type="GO" id="GO:0160147">
    <property type="term" value="F:tRNA pseudouridine(38-40) synthase activity"/>
    <property type="evidence" value="ECO:0007669"/>
    <property type="project" value="UniProtKB-EC"/>
</dbReference>
<dbReference type="GO" id="GO:0031119">
    <property type="term" value="P:tRNA pseudouridine synthesis"/>
    <property type="evidence" value="ECO:0007669"/>
    <property type="project" value="UniProtKB-UniRule"/>
</dbReference>
<dbReference type="CDD" id="cd02570">
    <property type="entry name" value="PseudoU_synth_EcTruA"/>
    <property type="match status" value="1"/>
</dbReference>
<dbReference type="FunFam" id="3.30.70.580:FF:000001">
    <property type="entry name" value="tRNA pseudouridine synthase A"/>
    <property type="match status" value="1"/>
</dbReference>
<dbReference type="FunFam" id="3.30.70.660:FF:000001">
    <property type="entry name" value="tRNA pseudouridine synthase A"/>
    <property type="match status" value="1"/>
</dbReference>
<dbReference type="Gene3D" id="3.30.70.660">
    <property type="entry name" value="Pseudouridine synthase I, catalytic domain, C-terminal subdomain"/>
    <property type="match status" value="1"/>
</dbReference>
<dbReference type="Gene3D" id="3.30.70.580">
    <property type="entry name" value="Pseudouridine synthase I, catalytic domain, N-terminal subdomain"/>
    <property type="match status" value="1"/>
</dbReference>
<dbReference type="HAMAP" id="MF_00171">
    <property type="entry name" value="TruA"/>
    <property type="match status" value="1"/>
</dbReference>
<dbReference type="InterPro" id="IPR020103">
    <property type="entry name" value="PsdUridine_synth_cat_dom_sf"/>
</dbReference>
<dbReference type="InterPro" id="IPR001406">
    <property type="entry name" value="PsdUridine_synth_TruA"/>
</dbReference>
<dbReference type="InterPro" id="IPR020097">
    <property type="entry name" value="PsdUridine_synth_TruA_a/b_dom"/>
</dbReference>
<dbReference type="InterPro" id="IPR020095">
    <property type="entry name" value="PsdUridine_synth_TruA_C"/>
</dbReference>
<dbReference type="InterPro" id="IPR020094">
    <property type="entry name" value="TruA/RsuA/RluB/E/F_N"/>
</dbReference>
<dbReference type="NCBIfam" id="TIGR00071">
    <property type="entry name" value="hisT_truA"/>
    <property type="match status" value="1"/>
</dbReference>
<dbReference type="PANTHER" id="PTHR11142">
    <property type="entry name" value="PSEUDOURIDYLATE SYNTHASE"/>
    <property type="match status" value="1"/>
</dbReference>
<dbReference type="PANTHER" id="PTHR11142:SF0">
    <property type="entry name" value="TRNA PSEUDOURIDINE SYNTHASE-LIKE 1"/>
    <property type="match status" value="1"/>
</dbReference>
<dbReference type="Pfam" id="PF01416">
    <property type="entry name" value="PseudoU_synth_1"/>
    <property type="match status" value="2"/>
</dbReference>
<dbReference type="PIRSF" id="PIRSF001430">
    <property type="entry name" value="tRNA_psdUrid_synth"/>
    <property type="match status" value="1"/>
</dbReference>
<dbReference type="SUPFAM" id="SSF55120">
    <property type="entry name" value="Pseudouridine synthase"/>
    <property type="match status" value="1"/>
</dbReference>
<organism>
    <name type="scientific">Klebsiella pneumoniae subsp. pneumoniae (strain ATCC 700721 / MGH 78578)</name>
    <dbReference type="NCBI Taxonomy" id="272620"/>
    <lineage>
        <taxon>Bacteria</taxon>
        <taxon>Pseudomonadati</taxon>
        <taxon>Pseudomonadota</taxon>
        <taxon>Gammaproteobacteria</taxon>
        <taxon>Enterobacterales</taxon>
        <taxon>Enterobacteriaceae</taxon>
        <taxon>Klebsiella/Raoultella group</taxon>
        <taxon>Klebsiella</taxon>
        <taxon>Klebsiella pneumoniae complex</taxon>
    </lineage>
</organism>
<name>TRUA_KLEP7</name>
<reference key="1">
    <citation type="submission" date="2006-09" db="EMBL/GenBank/DDBJ databases">
        <authorList>
            <consortium name="The Klebsiella pneumonia Genome Sequencing Project"/>
            <person name="McClelland M."/>
            <person name="Sanderson E.K."/>
            <person name="Spieth J."/>
            <person name="Clifton W.S."/>
            <person name="Latreille P."/>
            <person name="Sabo A."/>
            <person name="Pepin K."/>
            <person name="Bhonagiri V."/>
            <person name="Porwollik S."/>
            <person name="Ali J."/>
            <person name="Wilson R.K."/>
        </authorList>
    </citation>
    <scope>NUCLEOTIDE SEQUENCE [LARGE SCALE GENOMIC DNA]</scope>
    <source>
        <strain>ATCC 700721 / MGH 78578</strain>
    </source>
</reference>
<gene>
    <name evidence="1" type="primary">truA</name>
    <name type="ordered locus">KPN78578_26640</name>
    <name type="ORF">KPN_02708</name>
</gene>
<feature type="chain" id="PRO_1000017096" description="tRNA pseudouridine synthase A">
    <location>
        <begin position="1"/>
        <end position="270"/>
    </location>
</feature>
<feature type="region of interest" description="RNA binding" evidence="1">
    <location>
        <begin position="107"/>
        <end position="111"/>
    </location>
</feature>
<feature type="region of interest" description="Interaction with tRNA" evidence="1">
    <location>
        <begin position="168"/>
        <end position="172"/>
    </location>
</feature>
<feature type="active site" description="Nucleophile" evidence="1">
    <location>
        <position position="60"/>
    </location>
</feature>
<feature type="binding site" evidence="1">
    <location>
        <position position="118"/>
    </location>
    <ligand>
        <name>substrate</name>
    </ligand>
</feature>
<feature type="site" description="Interaction with tRNA; Important for base-flipping" evidence="1">
    <location>
        <position position="58"/>
    </location>
</feature>
<feature type="site" description="Interaction with tRNA" evidence="1">
    <location>
        <position position="78"/>
    </location>
</feature>
<feature type="site" description="Interaction with tRNA" evidence="1">
    <location>
        <position position="110"/>
    </location>
</feature>
<feature type="site" description="Interaction with tRNA" evidence="1">
    <location>
        <position position="126"/>
    </location>
</feature>
<feature type="site" description="Interaction with tRNA" evidence="1">
    <location>
        <position position="139"/>
    </location>
</feature>
<sequence>MSEMEQQPICKIALGIEYDGSKYYGWQRQNEVRSVQEKLEKALSQVANEPITVFCAGRTDAGVHGTGQVVHFETRAQRKDAAWTLGVNANLPGDIAVRWVKHVPADFHARFSATARRYRYVIYNHRLRPAVLSQGVTHFHQPLDAERMQRAAQCLLGENDFTSFRAVQCQSRTPWRNVMHINVTRYGAYVVVDIKANAFVHHMVRNIVGSLMEVGAGNQPESWMAELLAAKDRTLAAATAKAEGLYLVSVDYPAHYDLPVLPMGPLFLAD</sequence>
<keyword id="KW-0413">Isomerase</keyword>
<keyword id="KW-0819">tRNA processing</keyword>